<comment type="function">
    <text>Type X collagen is a product of hypertrophic chondrocytes and has been localized to presumptive mineralization zones of hyaline cartilage.</text>
</comment>
<comment type="subunit">
    <text>Homotrimer.</text>
</comment>
<comment type="subcellular location">
    <subcellularLocation>
        <location evidence="1">Secreted</location>
        <location evidence="1">Extracellular space</location>
        <location evidence="1">Extracellular matrix</location>
    </subcellularLocation>
</comment>
<comment type="PTM">
    <text>Prolines at the third position of the tripeptide repeating unit (G-X-Y) are hydroxylated in some or all of the chains.</text>
</comment>
<dbReference type="EMBL" id="X67348">
    <property type="protein sequence ID" value="CAA47763.1"/>
    <property type="molecule type" value="Genomic_DNA"/>
</dbReference>
<dbReference type="EMBL" id="Z21610">
    <property type="protein sequence ID" value="CAA79736.1"/>
    <property type="molecule type" value="Genomic_DNA"/>
</dbReference>
<dbReference type="EMBL" id="X65121">
    <property type="protein sequence ID" value="CAA46237.1"/>
    <property type="molecule type" value="Genomic_DNA"/>
</dbReference>
<dbReference type="EMBL" id="X63013">
    <property type="protein sequence ID" value="CAA44741.1"/>
    <property type="molecule type" value="mRNA"/>
</dbReference>
<dbReference type="CCDS" id="CCDS23780.1"/>
<dbReference type="PIR" id="S31216">
    <property type="entry name" value="S31216"/>
</dbReference>
<dbReference type="RefSeq" id="NP_034055.1">
    <property type="nucleotide sequence ID" value="NM_009925.4"/>
</dbReference>
<dbReference type="SMR" id="Q05306"/>
<dbReference type="ComplexPortal" id="CPX-2971">
    <property type="entry name" value="Collagen type X trimer"/>
</dbReference>
<dbReference type="FunCoup" id="Q05306">
    <property type="interactions" value="113"/>
</dbReference>
<dbReference type="STRING" id="10090.ENSMUSP00000101150"/>
<dbReference type="GlyGen" id="Q05306">
    <property type="glycosylation" value="3 sites"/>
</dbReference>
<dbReference type="iPTMnet" id="Q05306"/>
<dbReference type="PhosphoSitePlus" id="Q05306"/>
<dbReference type="PaxDb" id="10090-ENSMUSP00000101150"/>
<dbReference type="ProteomicsDB" id="277991"/>
<dbReference type="DNASU" id="12813"/>
<dbReference type="Ensembl" id="ENSMUST00000105511.2">
    <property type="protein sequence ID" value="ENSMUSP00000101150.2"/>
    <property type="gene ID" value="ENSMUSG00000039462.5"/>
</dbReference>
<dbReference type="GeneID" id="12813"/>
<dbReference type="KEGG" id="mmu:12813"/>
<dbReference type="UCSC" id="uc011xcr.1">
    <property type="organism name" value="mouse"/>
</dbReference>
<dbReference type="AGR" id="MGI:88445"/>
<dbReference type="CTD" id="1300"/>
<dbReference type="MGI" id="MGI:88445">
    <property type="gene designation" value="Col10a1"/>
</dbReference>
<dbReference type="VEuPathDB" id="HostDB:ENSMUSG00000039462"/>
<dbReference type="eggNOG" id="ENOG502QS5V">
    <property type="taxonomic scope" value="Eukaryota"/>
</dbReference>
<dbReference type="GeneTree" id="ENSGT00940000163953"/>
<dbReference type="HOGENOM" id="CLU_001074_21_0_1"/>
<dbReference type="InParanoid" id="Q05306"/>
<dbReference type="OMA" id="IMFTYDE"/>
<dbReference type="OrthoDB" id="10021193at2759"/>
<dbReference type="PhylomeDB" id="Q05306"/>
<dbReference type="TreeFam" id="TF334029"/>
<dbReference type="Reactome" id="R-MMU-1442490">
    <property type="pathway name" value="Collagen degradation"/>
</dbReference>
<dbReference type="Reactome" id="R-MMU-1650814">
    <property type="pathway name" value="Collagen biosynthesis and modifying enzymes"/>
</dbReference>
<dbReference type="Reactome" id="R-MMU-2022090">
    <property type="pathway name" value="Assembly of collagen fibrils and other multimeric structures"/>
</dbReference>
<dbReference type="Reactome" id="R-MMU-3000171">
    <property type="pathway name" value="Non-integrin membrane-ECM interactions"/>
</dbReference>
<dbReference type="Reactome" id="R-MMU-8948216">
    <property type="pathway name" value="Collagen chain trimerization"/>
</dbReference>
<dbReference type="BioGRID-ORCS" id="12813">
    <property type="hits" value="0 hits in 78 CRISPR screens"/>
</dbReference>
<dbReference type="PRO" id="PR:Q05306"/>
<dbReference type="Proteomes" id="UP000000589">
    <property type="component" value="Chromosome 10"/>
</dbReference>
<dbReference type="RNAct" id="Q05306">
    <property type="molecule type" value="protein"/>
</dbReference>
<dbReference type="Bgee" id="ENSMUSG00000039462">
    <property type="expression patterns" value="Expressed in humerus and 74 other cell types or tissues"/>
</dbReference>
<dbReference type="GO" id="GO:0005938">
    <property type="term" value="C:cell cortex"/>
    <property type="evidence" value="ECO:0000314"/>
    <property type="project" value="MGI"/>
</dbReference>
<dbReference type="GO" id="GO:0005581">
    <property type="term" value="C:collagen trimer"/>
    <property type="evidence" value="ECO:0000314"/>
    <property type="project" value="MGI"/>
</dbReference>
<dbReference type="GO" id="GO:0005599">
    <property type="term" value="C:collagen type X trimer"/>
    <property type="evidence" value="ECO:0000266"/>
    <property type="project" value="ComplexPortal"/>
</dbReference>
<dbReference type="GO" id="GO:0062023">
    <property type="term" value="C:collagen-containing extracellular matrix"/>
    <property type="evidence" value="ECO:0007005"/>
    <property type="project" value="BHF-UCL"/>
</dbReference>
<dbReference type="GO" id="GO:0031012">
    <property type="term" value="C:extracellular matrix"/>
    <property type="evidence" value="ECO:0000314"/>
    <property type="project" value="MGI"/>
</dbReference>
<dbReference type="GO" id="GO:0005576">
    <property type="term" value="C:extracellular region"/>
    <property type="evidence" value="ECO:0007669"/>
    <property type="project" value="UniProtKB-KW"/>
</dbReference>
<dbReference type="GO" id="GO:0043235">
    <property type="term" value="C:receptor complex"/>
    <property type="evidence" value="ECO:0000266"/>
    <property type="project" value="MGI"/>
</dbReference>
<dbReference type="GO" id="GO:0046872">
    <property type="term" value="F:metal ion binding"/>
    <property type="evidence" value="ECO:0007669"/>
    <property type="project" value="UniProtKB-KW"/>
</dbReference>
<dbReference type="GO" id="GO:0051216">
    <property type="term" value="P:cartilage development"/>
    <property type="evidence" value="ECO:0007669"/>
    <property type="project" value="Ensembl"/>
</dbReference>
<dbReference type="GO" id="GO:0001958">
    <property type="term" value="P:endochondral ossification"/>
    <property type="evidence" value="ECO:0007669"/>
    <property type="project" value="Ensembl"/>
</dbReference>
<dbReference type="FunFam" id="2.60.120.40:FF:000001">
    <property type="entry name" value="Complement C1q B chain"/>
    <property type="match status" value="1"/>
</dbReference>
<dbReference type="Gene3D" id="2.60.120.40">
    <property type="match status" value="1"/>
</dbReference>
<dbReference type="InterPro" id="IPR001073">
    <property type="entry name" value="C1q_dom"/>
</dbReference>
<dbReference type="InterPro" id="IPR008160">
    <property type="entry name" value="Collagen"/>
</dbReference>
<dbReference type="InterPro" id="IPR050392">
    <property type="entry name" value="Collagen/C1q_domain"/>
</dbReference>
<dbReference type="InterPro" id="IPR008983">
    <property type="entry name" value="Tumour_necrosis_fac-like_dom"/>
</dbReference>
<dbReference type="PANTHER" id="PTHR15427:SF48">
    <property type="entry name" value="COLLAGEN ALPHA-1(X) CHAIN"/>
    <property type="match status" value="1"/>
</dbReference>
<dbReference type="PANTHER" id="PTHR15427">
    <property type="entry name" value="EMILIN ELASTIN MICROFIBRIL INTERFACE-LOCATED PROTEIN ELASTIN MICROFIBRIL INTERFACER"/>
    <property type="match status" value="1"/>
</dbReference>
<dbReference type="Pfam" id="PF00386">
    <property type="entry name" value="C1q"/>
    <property type="match status" value="1"/>
</dbReference>
<dbReference type="Pfam" id="PF01391">
    <property type="entry name" value="Collagen"/>
    <property type="match status" value="3"/>
</dbReference>
<dbReference type="PRINTS" id="PR00007">
    <property type="entry name" value="COMPLEMNTC1Q"/>
</dbReference>
<dbReference type="SMART" id="SM00110">
    <property type="entry name" value="C1Q"/>
    <property type="match status" value="1"/>
</dbReference>
<dbReference type="SUPFAM" id="SSF49842">
    <property type="entry name" value="TNF-like"/>
    <property type="match status" value="1"/>
</dbReference>
<dbReference type="PROSITE" id="PS50871">
    <property type="entry name" value="C1Q"/>
    <property type="match status" value="1"/>
</dbReference>
<proteinExistence type="evidence at transcript level"/>
<reference key="1">
    <citation type="journal article" date="1993" name="Biochem. J.">
        <title>The mouse collagen X gene: complete nucleotide sequence, exon structure and expression pattern.</title>
        <authorList>
            <person name="Elima K."/>
            <person name="Eerola I."/>
            <person name="Rosati R."/>
            <person name="Metsaranta M."/>
            <person name="Garofalo S."/>
            <person name="Perala M."/>
            <person name="de Crombrugghe B."/>
            <person name="Vuorio E."/>
        </authorList>
    </citation>
    <scope>NUCLEOTIDE SEQUENCE [GENOMIC DNA]</scope>
    <source>
        <strain>BALB/cJ</strain>
    </source>
</reference>
<reference key="2">
    <citation type="journal article" date="1993" name="Eur. J. Biochem.">
        <title>Intron-exon structure, alternative use of promoter and expression of the mouse collagen X gene, Col10a-1.</title>
        <authorList>
            <person name="Kong R.Y.C."/>
            <person name="Kwan K.M."/>
            <person name="Lau E.T."/>
            <person name="Thomas J.T."/>
            <person name="Boot-Handford R.P."/>
            <person name="Grant M.E."/>
            <person name="Cheah K.S.E."/>
        </authorList>
    </citation>
    <scope>NUCLEOTIDE SEQUENCE [GENOMIC DNA]</scope>
    <source>
        <strain>129/Sv</strain>
        <tissue>Liver</tissue>
    </source>
</reference>
<reference key="3">
    <citation type="journal article" date="1993" name="Matrix">
        <title>Characterization of the mouse type X collagen gene.</title>
        <authorList>
            <person name="Apte S.S."/>
            <person name="Olsen B.R."/>
        </authorList>
    </citation>
    <scope>NUCLEOTIDE SEQUENCE</scope>
</reference>
<reference key="4">
    <citation type="journal article" date="1992" name="Eur. J. Biochem.">
        <title>Cloning of the human and mouse type X collagen genes and mapping of the mouse type X collagen gene to chromosome 10.</title>
        <authorList>
            <person name="Apte S.S."/>
            <person name="Seldin M.F."/>
            <person name="Hayashi M."/>
            <person name="Olsen B.R."/>
        </authorList>
    </citation>
    <scope>NUCLEOTIDE SEQUENCE [GENOMIC DNA] OF 51-680</scope>
    <source>
        <strain>DBA/2J</strain>
    </source>
</reference>
<reference key="5">
    <citation type="journal article" date="1992" name="Biochim. Biophys. Acta">
        <title>Specific hybridization probes for mouse alpha 2(IX) and alpha 1(X) collagen mRNAs.</title>
        <authorList>
            <person name="Elima K."/>
            <person name="Metsaeranta M."/>
            <person name="Kallio J."/>
            <person name="Peraelae M."/>
            <person name="Eerola I."/>
            <person name="Garofalo S."/>
            <person name="de Crombrugghe B."/>
            <person name="Vuorio E."/>
        </authorList>
    </citation>
    <scope>NUCLEOTIDE SEQUENCE [MRNA] OF 385-627</scope>
    <source>
        <strain>C57BL/6J</strain>
    </source>
</reference>
<protein>
    <recommendedName>
        <fullName>Collagen alpha-1(X) chain</fullName>
    </recommendedName>
</protein>
<gene>
    <name type="primary">Col10a1</name>
</gene>
<feature type="signal peptide" evidence="3">
    <location>
        <begin position="1"/>
        <end position="18"/>
    </location>
</feature>
<feature type="chain" id="PRO_0000005771" description="Collagen alpha-1(X) chain">
    <location>
        <begin position="19"/>
        <end position="680"/>
    </location>
</feature>
<feature type="domain" description="C1q" evidence="4">
    <location>
        <begin position="547"/>
        <end position="680"/>
    </location>
</feature>
<feature type="region of interest" description="Nonhelical region (NC2)">
    <location>
        <begin position="19"/>
        <end position="56"/>
    </location>
</feature>
<feature type="region of interest" description="Disordered" evidence="5">
    <location>
        <begin position="54"/>
        <end position="531"/>
    </location>
</feature>
<feature type="region of interest" description="Triple-helical region">
    <location>
        <begin position="57"/>
        <end position="519"/>
    </location>
</feature>
<feature type="region of interest" description="Nonhelical region (NC1)">
    <location>
        <begin position="520"/>
        <end position="680"/>
    </location>
</feature>
<feature type="compositionally biased region" description="Pro residues" evidence="5">
    <location>
        <begin position="137"/>
        <end position="147"/>
    </location>
</feature>
<feature type="compositionally biased region" description="Pro residues" evidence="5">
    <location>
        <begin position="207"/>
        <end position="216"/>
    </location>
</feature>
<feature type="compositionally biased region" description="Low complexity" evidence="5">
    <location>
        <begin position="303"/>
        <end position="321"/>
    </location>
</feature>
<feature type="compositionally biased region" description="Low complexity" evidence="5">
    <location>
        <begin position="373"/>
        <end position="382"/>
    </location>
</feature>
<feature type="compositionally biased region" description="Low complexity" evidence="5">
    <location>
        <begin position="391"/>
        <end position="409"/>
    </location>
</feature>
<feature type="compositionally biased region" description="Gly residues" evidence="5">
    <location>
        <begin position="410"/>
        <end position="419"/>
    </location>
</feature>
<feature type="compositionally biased region" description="Low complexity" evidence="5">
    <location>
        <begin position="423"/>
        <end position="433"/>
    </location>
</feature>
<feature type="compositionally biased region" description="Low complexity" evidence="5">
    <location>
        <begin position="442"/>
        <end position="453"/>
    </location>
</feature>
<feature type="compositionally biased region" description="Pro residues" evidence="5">
    <location>
        <begin position="506"/>
        <end position="516"/>
    </location>
</feature>
<feature type="binding site" evidence="2">
    <location>
        <position position="626"/>
    </location>
    <ligand>
        <name>Ca(2+)</name>
        <dbReference type="ChEBI" id="CHEBI:29108"/>
        <label>1</label>
    </ligand>
</feature>
<feature type="binding site" evidence="2">
    <location>
        <position position="627"/>
    </location>
    <ligand>
        <name>Ca(2+)</name>
        <dbReference type="ChEBI" id="CHEBI:29108"/>
        <label>1</label>
    </ligand>
</feature>
<feature type="binding site" evidence="2">
    <location>
        <position position="633"/>
    </location>
    <ligand>
        <name>Ca(2+)</name>
        <dbReference type="ChEBI" id="CHEBI:29108"/>
        <label>1</label>
    </ligand>
</feature>
<feature type="binding site" evidence="2">
    <location>
        <position position="634"/>
    </location>
    <ligand>
        <name>Ca(2+)</name>
        <dbReference type="ChEBI" id="CHEBI:29108"/>
        <label>1</label>
    </ligand>
</feature>
<feature type="binding site" evidence="2">
    <location>
        <position position="634"/>
    </location>
    <ligand>
        <name>Ca(2+)</name>
        <dbReference type="ChEBI" id="CHEBI:29108"/>
        <label>2</label>
        <note>ligand shared between two neighboring subunits</note>
    </ligand>
</feature>
<feature type="sequence conflict" description="In Ref. 3; no nucleotide entry." evidence="6" ref="3">
    <original>L</original>
    <variation>F</variation>
    <location>
        <position position="13"/>
    </location>
</feature>
<feature type="sequence conflict" description="In Ref. 3; no nucleotide entry." evidence="6" ref="3">
    <original>T</original>
    <variation>S</variation>
    <location>
        <position position="27"/>
    </location>
</feature>
<feature type="sequence conflict" description="In Ref. 3; no nucleotide entry and 4; CAA46237." evidence="6" ref="3 4">
    <original>P</original>
    <variation>L</variation>
    <location>
        <position position="248"/>
    </location>
</feature>
<feature type="sequence conflict" description="In Ref. 2; CAA79736." evidence="6" ref="2">
    <original>A</original>
    <variation>S</variation>
    <location>
        <position position="286"/>
    </location>
</feature>
<feature type="sequence conflict" description="In Ref. 3; no nucleotide entry and 4; CAA46237." evidence="6" ref="3 4">
    <original>L</original>
    <variation>F</variation>
    <location>
        <position position="306"/>
    </location>
</feature>
<feature type="sequence conflict" description="In Ref. 3; no nucleotide entry and 4; CAA46237." evidence="6" ref="3 4">
    <original>T</original>
    <variation>S</variation>
    <location>
        <position position="417"/>
    </location>
</feature>
<feature type="sequence conflict" description="In Ref. 5; CAA44741." evidence="6" ref="5">
    <original>R</original>
    <variation>K</variation>
    <location>
        <position position="451"/>
    </location>
</feature>
<feature type="sequence conflict" description="In Ref. 3; no nucleotide entry and 4; CAA46237." evidence="6" ref="3 4">
    <original>H</original>
    <variation>L</variation>
    <location>
        <position position="500"/>
    </location>
</feature>
<feature type="sequence conflict" description="In Ref. 3; no nucleotide entry and 4; CAA46237." evidence="6" ref="3 4">
    <original>APIPFD</original>
    <variation>CPHPIY</variation>
    <location>
        <begin position="567"/>
        <end position="572"/>
    </location>
</feature>
<feature type="sequence conflict" description="In Ref. 3; no nucleotide entry and 4; CAA46237." evidence="6" ref="3 4">
    <original>Q</original>
    <variation>T</variation>
    <location>
        <position position="635"/>
    </location>
</feature>
<accession>Q05306</accession>
<evidence type="ECO:0000250" key="1"/>
<evidence type="ECO:0000250" key="2">
    <source>
        <dbReference type="UniProtKB" id="Q03692"/>
    </source>
</evidence>
<evidence type="ECO:0000255" key="3"/>
<evidence type="ECO:0000255" key="4">
    <source>
        <dbReference type="PROSITE-ProRule" id="PRU00368"/>
    </source>
</evidence>
<evidence type="ECO:0000256" key="5">
    <source>
        <dbReference type="SAM" id="MobiDB-lite"/>
    </source>
</evidence>
<evidence type="ECO:0000305" key="6"/>
<name>COAA1_MOUSE</name>
<keyword id="KW-0106">Calcium</keyword>
<keyword id="KW-0176">Collagen</keyword>
<keyword id="KW-0272">Extracellular matrix</keyword>
<keyword id="KW-0379">Hydroxylation</keyword>
<keyword id="KW-0479">Metal-binding</keyword>
<keyword id="KW-1185">Reference proteome</keyword>
<keyword id="KW-0677">Repeat</keyword>
<keyword id="KW-0964">Secreted</keyword>
<keyword id="KW-0732">Signal</keyword>
<sequence>MLPQIPFLLLMFLTLVHGMFYAERYQTPTGIKGPLASPKTQYFIPYAIKSKGIPVRGEQGIPGPPGPTGPRGHPGPSGPPGKPGYGSPGLQGEPGLPGPPGISATGKPGLPGPPGKPGERGPYGHKGDIGPAGLPGPRGPPGPPGIPGPAGISVPGKPGQQGLTGAPGPRGFPGEKGAQGAPGVNGRKGETGYGSPGRPGERGLPGPQGPIGPPGPSGVGRRGENGFPGQPGIKGDRGFPGEMGPSGPPGPQGPPGKQGREGIGKPGAIGSPGQPGIPGEKGHPGAPGIAGPPGAPGFGKQGLPGLRGQRGPAGLPGAPGAKGERGPAGHPGEPGLPGSPGNMGPQGPKGIPGNHGIPGAKGEIGLVGPAGPPGARGARGPPGLDGKTGYPGEPGLNGPKGNPGLPGQKGDPGVGGTPGLRGPVGPVGAKGVPGHNGEAGPRGEPGIPGTRGPTGPPGVPGFPGSKGDPGNPGAPGPAGIATKGLNGPTGPPGPPGPRGHSGEPGLPGPPGPPGPPGQAVMPDGFIKAGQRPRLSGMPLVSANHGVTGMPVSAFTVILSKAYPAVGAPIPFDEILYNRQQHYDPRSGIFTCKIPGIYYFSYHVHVKGTHVWVGLYKNGTPTMYTYDEYSKGYLDQASGSAIMELTENDQVWLQLPNAESNGLYSSEYVHSSFSGFLVAPM</sequence>
<organism>
    <name type="scientific">Mus musculus</name>
    <name type="common">Mouse</name>
    <dbReference type="NCBI Taxonomy" id="10090"/>
    <lineage>
        <taxon>Eukaryota</taxon>
        <taxon>Metazoa</taxon>
        <taxon>Chordata</taxon>
        <taxon>Craniata</taxon>
        <taxon>Vertebrata</taxon>
        <taxon>Euteleostomi</taxon>
        <taxon>Mammalia</taxon>
        <taxon>Eutheria</taxon>
        <taxon>Euarchontoglires</taxon>
        <taxon>Glires</taxon>
        <taxon>Rodentia</taxon>
        <taxon>Myomorpha</taxon>
        <taxon>Muroidea</taxon>
        <taxon>Muridae</taxon>
        <taxon>Murinae</taxon>
        <taxon>Mus</taxon>
        <taxon>Mus</taxon>
    </lineage>
</organism>